<name>Y910_MAGMM</name>
<gene>
    <name type="ordered locus">Mmc1_0910</name>
</gene>
<feature type="chain" id="PRO_0000291107" description="UPF0434 protein Mmc1_0910">
    <location>
        <begin position="1"/>
        <end position="59"/>
    </location>
</feature>
<organism>
    <name type="scientific">Magnetococcus marinus (strain ATCC BAA-1437 / JCM 17883 / MC-1)</name>
    <dbReference type="NCBI Taxonomy" id="156889"/>
    <lineage>
        <taxon>Bacteria</taxon>
        <taxon>Pseudomonadati</taxon>
        <taxon>Pseudomonadota</taxon>
        <taxon>Alphaproteobacteria</taxon>
        <taxon>Magnetococcales</taxon>
        <taxon>Magnetococcaceae</taxon>
        <taxon>Magnetococcus</taxon>
    </lineage>
</organism>
<proteinExistence type="inferred from homology"/>
<accession>A0L636</accession>
<dbReference type="EMBL" id="CP000471">
    <property type="protein sequence ID" value="ABK43429.1"/>
    <property type="molecule type" value="Genomic_DNA"/>
</dbReference>
<dbReference type="RefSeq" id="WP_011712586.1">
    <property type="nucleotide sequence ID" value="NC_008576.1"/>
</dbReference>
<dbReference type="SMR" id="A0L636"/>
<dbReference type="STRING" id="156889.Mmc1_0910"/>
<dbReference type="KEGG" id="mgm:Mmc1_0910"/>
<dbReference type="eggNOG" id="COG2835">
    <property type="taxonomic scope" value="Bacteria"/>
</dbReference>
<dbReference type="HOGENOM" id="CLU_155659_3_1_5"/>
<dbReference type="Proteomes" id="UP000002586">
    <property type="component" value="Chromosome"/>
</dbReference>
<dbReference type="GO" id="GO:0005829">
    <property type="term" value="C:cytosol"/>
    <property type="evidence" value="ECO:0007669"/>
    <property type="project" value="TreeGrafter"/>
</dbReference>
<dbReference type="FunFam" id="2.20.25.10:FF:000002">
    <property type="entry name" value="UPF0434 protein YcaR"/>
    <property type="match status" value="1"/>
</dbReference>
<dbReference type="Gene3D" id="2.20.25.10">
    <property type="match status" value="1"/>
</dbReference>
<dbReference type="HAMAP" id="MF_01187">
    <property type="entry name" value="UPF0434"/>
    <property type="match status" value="1"/>
</dbReference>
<dbReference type="InterPro" id="IPR005651">
    <property type="entry name" value="Trm112-like"/>
</dbReference>
<dbReference type="PANTHER" id="PTHR33505:SF4">
    <property type="entry name" value="PROTEIN PREY, MITOCHONDRIAL"/>
    <property type="match status" value="1"/>
</dbReference>
<dbReference type="PANTHER" id="PTHR33505">
    <property type="entry name" value="ZGC:162634"/>
    <property type="match status" value="1"/>
</dbReference>
<dbReference type="Pfam" id="PF03966">
    <property type="entry name" value="Trm112p"/>
    <property type="match status" value="1"/>
</dbReference>
<dbReference type="SUPFAM" id="SSF158997">
    <property type="entry name" value="Trm112p-like"/>
    <property type="match status" value="1"/>
</dbReference>
<evidence type="ECO:0000255" key="1">
    <source>
        <dbReference type="HAMAP-Rule" id="MF_01187"/>
    </source>
</evidence>
<sequence length="59" mass="6586">MLDKQLLDILVCPVCKGTLSVDKGHTELVCDKDKLAFPVRDDIPVMLMEEARKLEADDA</sequence>
<reference key="1">
    <citation type="journal article" date="2009" name="Appl. Environ. Microbiol.">
        <title>Complete genome sequence of the chemolithoautotrophic marine magnetotactic coccus strain MC-1.</title>
        <authorList>
            <person name="Schubbe S."/>
            <person name="Williams T.J."/>
            <person name="Xie G."/>
            <person name="Kiss H.E."/>
            <person name="Brettin T.S."/>
            <person name="Martinez D."/>
            <person name="Ross C.A."/>
            <person name="Schuler D."/>
            <person name="Cox B.L."/>
            <person name="Nealson K.H."/>
            <person name="Bazylinski D.A."/>
        </authorList>
    </citation>
    <scope>NUCLEOTIDE SEQUENCE [LARGE SCALE GENOMIC DNA]</scope>
    <source>
        <strain>ATCC BAA-1437 / JCM 17883 / MC-1</strain>
    </source>
</reference>
<protein>
    <recommendedName>
        <fullName evidence="1">UPF0434 protein Mmc1_0910</fullName>
    </recommendedName>
</protein>
<keyword id="KW-1185">Reference proteome</keyword>
<comment type="similarity">
    <text evidence="1">Belongs to the UPF0434 family.</text>
</comment>